<organism>
    <name type="scientific">Homo sapiens</name>
    <name type="common">Human</name>
    <dbReference type="NCBI Taxonomy" id="9606"/>
    <lineage>
        <taxon>Eukaryota</taxon>
        <taxon>Metazoa</taxon>
        <taxon>Chordata</taxon>
        <taxon>Craniata</taxon>
        <taxon>Vertebrata</taxon>
        <taxon>Euteleostomi</taxon>
        <taxon>Mammalia</taxon>
        <taxon>Eutheria</taxon>
        <taxon>Euarchontoglires</taxon>
        <taxon>Primates</taxon>
        <taxon>Haplorrhini</taxon>
        <taxon>Catarrhini</taxon>
        <taxon>Hominidae</taxon>
        <taxon>Homo</taxon>
    </lineage>
</organism>
<sequence length="445" mass="49910">MLCYVTRPDAVLMEVEVEAKANGEDCLNQVCRRLGIIEVDYFGLQFTGSKGESLWLNLRNRISQQMDGLAPYRLKLRVKFFVEPHLILQEQTRHIFFLHIKEALLAGHLLCSPEQAVELSALLAQTKFGDYNQNTAKYNYEELCAKELSSATLNSIVAKHKELEGTSQASAEYQVLQIVSAMENYGIEWHSVRDSEGQKLLIGVGPEGISICKDDFSPINRIAYPVVQMATQSGKNVYLTVTKESGNSIVLLFKMISTRAASGLYRAITETHAFYRCDTVTSAVMMQYSRDLKGHLASLFLNENINLGKKYVFDIKRTSKEVYDHARRALYNAGVVDLVSRNNQSPSHSPLKSSESSMNCSSCEGLSCQQTRVLQEKLRKLKEAMLCMVCCEEEINSTFCPCGHTVCCESCAAQLQSCPVCRSRVEHVQHVYLPTHTSLLNLTVI</sequence>
<proteinExistence type="evidence at protein level"/>
<evidence type="ECO:0000255" key="1">
    <source>
        <dbReference type="PROSITE-ProRule" id="PRU00084"/>
    </source>
</evidence>
<evidence type="ECO:0000255" key="2">
    <source>
        <dbReference type="PROSITE-ProRule" id="PRU00175"/>
    </source>
</evidence>
<evidence type="ECO:0000269" key="3">
    <source>
    </source>
</evidence>
<evidence type="ECO:0000269" key="4">
    <source>
    </source>
</evidence>
<evidence type="ECO:0000269" key="5">
    <source>
    </source>
</evidence>
<evidence type="ECO:0000269" key="6">
    <source>
    </source>
</evidence>
<evidence type="ECO:0000269" key="7">
    <source>
    </source>
</evidence>
<evidence type="ECO:0000269" key="8">
    <source>
    </source>
</evidence>
<evidence type="ECO:0000269" key="9">
    <source>
    </source>
</evidence>
<evidence type="ECO:0000269" key="10">
    <source>
    </source>
</evidence>
<evidence type="ECO:0000269" key="11">
    <source>
    </source>
</evidence>
<evidence type="ECO:0000269" key="12">
    <source ref="2"/>
</evidence>
<evidence type="ECO:0000303" key="13">
    <source>
    </source>
</evidence>
<evidence type="ECO:0000305" key="14"/>
<evidence type="ECO:0000305" key="15">
    <source>
    </source>
</evidence>
<evidence type="ECO:0007829" key="16">
    <source>
        <dbReference type="PDB" id="2YHO"/>
    </source>
</evidence>
<evidence type="ECO:0007829" key="17">
    <source>
        <dbReference type="PDB" id="6QLY"/>
    </source>
</evidence>
<evidence type="ECO:0007829" key="18">
    <source>
        <dbReference type="PDB" id="6QLZ"/>
    </source>
</evidence>
<keyword id="KW-0002">3D-structure</keyword>
<keyword id="KW-0025">Alternative splicing</keyword>
<keyword id="KW-1003">Cell membrane</keyword>
<keyword id="KW-0963">Cytoplasm</keyword>
<keyword id="KW-0408">Iron</keyword>
<keyword id="KW-0472">Membrane</keyword>
<keyword id="KW-0479">Metal-binding</keyword>
<keyword id="KW-1267">Proteomics identification</keyword>
<keyword id="KW-1185">Reference proteome</keyword>
<keyword id="KW-0808">Transferase</keyword>
<keyword id="KW-0832">Ubl conjugation</keyword>
<keyword id="KW-0833">Ubl conjugation pathway</keyword>
<keyword id="KW-0862">Zinc</keyword>
<keyword id="KW-0863">Zinc-finger</keyword>
<reference key="1">
    <citation type="journal article" date="1999" name="J. Biol. Chem.">
        <title>MIR is a novel ERM-like protein that interacts with myosin regulatory light chain and inhibits neurite outgrowth.</title>
        <authorList>
            <person name="Olsson P.-A."/>
            <person name="Korhonen L."/>
            <person name="Mercer E.A."/>
            <person name="Lindholm D."/>
        </authorList>
    </citation>
    <scope>NUCLEOTIDE SEQUENCE [MRNA] (ISOFORM 1)</scope>
    <scope>TISSUE SPECIFICITY</scope>
    <scope>DEVELOPMENTAL STAGE</scope>
    <scope>FUNCTION</scope>
    <scope>INTERACTION WITH MYOSIN REGULATORY LIGHT CHAIN (MRLC)</scope>
    <scope>VARIANT SER-342</scope>
    <source>
        <tissue>Brain</tissue>
    </source>
</reference>
<reference key="2">
    <citation type="submission" date="1997-05" db="EMBL/GenBank/DDBJ databases">
        <authorList>
            <person name="Shi W."/>
            <person name="Mullersman J.E."/>
        </authorList>
    </citation>
    <scope>NUCLEOTIDE SEQUENCE [MRNA] (ISOFORM 1)</scope>
    <scope>VARIANT SER-342</scope>
</reference>
<reference key="3">
    <citation type="journal article" date="2000" name="Genome Res.">
        <title>Cloning and functional analysis of cDNAs with open reading frames for 300 previously undefined genes expressed in CD34+ hematopoietic stem/progenitor cells.</title>
        <authorList>
            <person name="Zhang Q.-H."/>
            <person name="Ye M."/>
            <person name="Wu X.-Y."/>
            <person name="Ren S.-X."/>
            <person name="Zhao M."/>
            <person name="Zhao C.-J."/>
            <person name="Fu G."/>
            <person name="Shen Y."/>
            <person name="Fan H.-Y."/>
            <person name="Lu G."/>
            <person name="Zhong M."/>
            <person name="Xu X.-R."/>
            <person name="Han Z.-G."/>
            <person name="Zhang J.-W."/>
            <person name="Tao J."/>
            <person name="Huang Q.-H."/>
            <person name="Zhou J."/>
            <person name="Hu G.-X."/>
            <person name="Gu J."/>
            <person name="Chen S.-J."/>
            <person name="Chen Z."/>
        </authorList>
    </citation>
    <scope>NUCLEOTIDE SEQUENCE [LARGE SCALE MRNA] (ISOFORM 2)</scope>
    <scope>VARIANT SER-342</scope>
    <source>
        <tissue>Bone marrow</tissue>
    </source>
</reference>
<reference key="4">
    <citation type="journal article" date="2004" name="Proc. Natl. Acad. Sci. U.S.A.">
        <title>Large-scale cDNA transfection screening for genes related to cancer development and progression.</title>
        <authorList>
            <person name="Wan D."/>
            <person name="Gong Y."/>
            <person name="Qin W."/>
            <person name="Zhang P."/>
            <person name="Li J."/>
            <person name="Wei L."/>
            <person name="Zhou X."/>
            <person name="Li H."/>
            <person name="Qiu X."/>
            <person name="Zhong F."/>
            <person name="He L."/>
            <person name="Yu J."/>
            <person name="Yao G."/>
            <person name="Jiang H."/>
            <person name="Qian L."/>
            <person name="Yu Y."/>
            <person name="Shu H."/>
            <person name="Chen X."/>
            <person name="Xu H."/>
            <person name="Guo M."/>
            <person name="Pan Z."/>
            <person name="Chen Y."/>
            <person name="Ge C."/>
            <person name="Yang S."/>
            <person name="Gu J."/>
        </authorList>
    </citation>
    <scope>NUCLEOTIDE SEQUENCE [LARGE SCALE MRNA] (ISOFORM 1)</scope>
    <scope>VARIANT SER-342</scope>
</reference>
<reference key="5">
    <citation type="submission" date="2003-05" db="EMBL/GenBank/DDBJ databases">
        <title>Cloning of human full-length CDSs in BD Creator(TM) system donor vector.</title>
        <authorList>
            <person name="Kalnine N."/>
            <person name="Chen X."/>
            <person name="Rolfs A."/>
            <person name="Halleck A."/>
            <person name="Hines L."/>
            <person name="Eisenstein S."/>
            <person name="Koundinya M."/>
            <person name="Raphael J."/>
            <person name="Moreira D."/>
            <person name="Kelley T."/>
            <person name="LaBaer J."/>
            <person name="Lin Y."/>
            <person name="Phelan M."/>
            <person name="Farmer A."/>
        </authorList>
    </citation>
    <scope>NUCLEOTIDE SEQUENCE [LARGE SCALE MRNA] (ISOFORM 1)</scope>
</reference>
<reference key="6">
    <citation type="journal article" date="2003" name="Nature">
        <title>The DNA sequence and analysis of human chromosome 6.</title>
        <authorList>
            <person name="Mungall A.J."/>
            <person name="Palmer S.A."/>
            <person name="Sims S.K."/>
            <person name="Edwards C.A."/>
            <person name="Ashurst J.L."/>
            <person name="Wilming L."/>
            <person name="Jones M.C."/>
            <person name="Horton R."/>
            <person name="Hunt S.E."/>
            <person name="Scott C.E."/>
            <person name="Gilbert J.G.R."/>
            <person name="Clamp M.E."/>
            <person name="Bethel G."/>
            <person name="Milne S."/>
            <person name="Ainscough R."/>
            <person name="Almeida J.P."/>
            <person name="Ambrose K.D."/>
            <person name="Andrews T.D."/>
            <person name="Ashwell R.I.S."/>
            <person name="Babbage A.K."/>
            <person name="Bagguley C.L."/>
            <person name="Bailey J."/>
            <person name="Banerjee R."/>
            <person name="Barker D.J."/>
            <person name="Barlow K.F."/>
            <person name="Bates K."/>
            <person name="Beare D.M."/>
            <person name="Beasley H."/>
            <person name="Beasley O."/>
            <person name="Bird C.P."/>
            <person name="Blakey S.E."/>
            <person name="Bray-Allen S."/>
            <person name="Brook J."/>
            <person name="Brown A.J."/>
            <person name="Brown J.Y."/>
            <person name="Burford D.C."/>
            <person name="Burrill W."/>
            <person name="Burton J."/>
            <person name="Carder C."/>
            <person name="Carter N.P."/>
            <person name="Chapman J.C."/>
            <person name="Clark S.Y."/>
            <person name="Clark G."/>
            <person name="Clee C.M."/>
            <person name="Clegg S."/>
            <person name="Cobley V."/>
            <person name="Collier R.E."/>
            <person name="Collins J.E."/>
            <person name="Colman L.K."/>
            <person name="Corby N.R."/>
            <person name="Coville G.J."/>
            <person name="Culley K.M."/>
            <person name="Dhami P."/>
            <person name="Davies J."/>
            <person name="Dunn M."/>
            <person name="Earthrowl M.E."/>
            <person name="Ellington A.E."/>
            <person name="Evans K.A."/>
            <person name="Faulkner L."/>
            <person name="Francis M.D."/>
            <person name="Frankish A."/>
            <person name="Frankland J."/>
            <person name="French L."/>
            <person name="Garner P."/>
            <person name="Garnett J."/>
            <person name="Ghori M.J."/>
            <person name="Gilby L.M."/>
            <person name="Gillson C.J."/>
            <person name="Glithero R.J."/>
            <person name="Grafham D.V."/>
            <person name="Grant M."/>
            <person name="Gribble S."/>
            <person name="Griffiths C."/>
            <person name="Griffiths M.N.D."/>
            <person name="Hall R."/>
            <person name="Halls K.S."/>
            <person name="Hammond S."/>
            <person name="Harley J.L."/>
            <person name="Hart E.A."/>
            <person name="Heath P.D."/>
            <person name="Heathcott R."/>
            <person name="Holmes S.J."/>
            <person name="Howden P.J."/>
            <person name="Howe K.L."/>
            <person name="Howell G.R."/>
            <person name="Huckle E."/>
            <person name="Humphray S.J."/>
            <person name="Humphries M.D."/>
            <person name="Hunt A.R."/>
            <person name="Johnson C.M."/>
            <person name="Joy A.A."/>
            <person name="Kay M."/>
            <person name="Keenan S.J."/>
            <person name="Kimberley A.M."/>
            <person name="King A."/>
            <person name="Laird G.K."/>
            <person name="Langford C."/>
            <person name="Lawlor S."/>
            <person name="Leongamornlert D.A."/>
            <person name="Leversha M."/>
            <person name="Lloyd C.R."/>
            <person name="Lloyd D.M."/>
            <person name="Loveland J.E."/>
            <person name="Lovell J."/>
            <person name="Martin S."/>
            <person name="Mashreghi-Mohammadi M."/>
            <person name="Maslen G.L."/>
            <person name="Matthews L."/>
            <person name="McCann O.T."/>
            <person name="McLaren S.J."/>
            <person name="McLay K."/>
            <person name="McMurray A."/>
            <person name="Moore M.J.F."/>
            <person name="Mullikin J.C."/>
            <person name="Niblett D."/>
            <person name="Nickerson T."/>
            <person name="Novik K.L."/>
            <person name="Oliver K."/>
            <person name="Overton-Larty E.K."/>
            <person name="Parker A."/>
            <person name="Patel R."/>
            <person name="Pearce A.V."/>
            <person name="Peck A.I."/>
            <person name="Phillimore B.J.C.T."/>
            <person name="Phillips S."/>
            <person name="Plumb R.W."/>
            <person name="Porter K.M."/>
            <person name="Ramsey Y."/>
            <person name="Ranby S.A."/>
            <person name="Rice C.M."/>
            <person name="Ross M.T."/>
            <person name="Searle S.M."/>
            <person name="Sehra H.K."/>
            <person name="Sheridan E."/>
            <person name="Skuce C.D."/>
            <person name="Smith S."/>
            <person name="Smith M."/>
            <person name="Spraggon L."/>
            <person name="Squares S.L."/>
            <person name="Steward C.A."/>
            <person name="Sycamore N."/>
            <person name="Tamlyn-Hall G."/>
            <person name="Tester J."/>
            <person name="Theaker A.J."/>
            <person name="Thomas D.W."/>
            <person name="Thorpe A."/>
            <person name="Tracey A."/>
            <person name="Tromans A."/>
            <person name="Tubby B."/>
            <person name="Wall M."/>
            <person name="Wallis J.M."/>
            <person name="West A.P."/>
            <person name="White S.S."/>
            <person name="Whitehead S.L."/>
            <person name="Whittaker H."/>
            <person name="Wild A."/>
            <person name="Willey D.J."/>
            <person name="Wilmer T.E."/>
            <person name="Wood J.M."/>
            <person name="Wray P.W."/>
            <person name="Wyatt J.C."/>
            <person name="Young L."/>
            <person name="Younger R.M."/>
            <person name="Bentley D.R."/>
            <person name="Coulson A."/>
            <person name="Durbin R.M."/>
            <person name="Hubbard T."/>
            <person name="Sulston J.E."/>
            <person name="Dunham I."/>
            <person name="Rogers J."/>
            <person name="Beck S."/>
        </authorList>
    </citation>
    <scope>NUCLEOTIDE SEQUENCE [LARGE SCALE GENOMIC DNA]</scope>
</reference>
<reference key="7">
    <citation type="submission" date="2005-07" db="EMBL/GenBank/DDBJ databases">
        <authorList>
            <person name="Mural R.J."/>
            <person name="Istrail S."/>
            <person name="Sutton G.G."/>
            <person name="Florea L."/>
            <person name="Halpern A.L."/>
            <person name="Mobarry C.M."/>
            <person name="Lippert R."/>
            <person name="Walenz B."/>
            <person name="Shatkay H."/>
            <person name="Dew I."/>
            <person name="Miller J.R."/>
            <person name="Flanigan M.J."/>
            <person name="Edwards N.J."/>
            <person name="Bolanos R."/>
            <person name="Fasulo D."/>
            <person name="Halldorsson B.V."/>
            <person name="Hannenhalli S."/>
            <person name="Turner R."/>
            <person name="Yooseph S."/>
            <person name="Lu F."/>
            <person name="Nusskern D.R."/>
            <person name="Shue B.C."/>
            <person name="Zheng X.H."/>
            <person name="Zhong F."/>
            <person name="Delcher A.L."/>
            <person name="Huson D.H."/>
            <person name="Kravitz S.A."/>
            <person name="Mouchard L."/>
            <person name="Reinert K."/>
            <person name="Remington K.A."/>
            <person name="Clark A.G."/>
            <person name="Waterman M.S."/>
            <person name="Eichler E.E."/>
            <person name="Adams M.D."/>
            <person name="Hunkapiller M.W."/>
            <person name="Myers E.W."/>
            <person name="Venter J.C."/>
        </authorList>
    </citation>
    <scope>NUCLEOTIDE SEQUENCE [LARGE SCALE GENOMIC DNA]</scope>
</reference>
<reference key="8">
    <citation type="journal article" date="2004" name="Genome Res.">
        <title>The status, quality, and expansion of the NIH full-length cDNA project: the Mammalian Gene Collection (MGC).</title>
        <authorList>
            <consortium name="The MGC Project Team"/>
        </authorList>
    </citation>
    <scope>NUCLEOTIDE SEQUENCE [LARGE SCALE MRNA] (ISOFORM 1)</scope>
    <source>
        <tissue>Placenta</tissue>
    </source>
</reference>
<reference key="9">
    <citation type="journal article" date="2003" name="FEBS Lett.">
        <title>Functional activities and cellular localization of the ezrin, radixin, moesin (ERM) and RING zinc finger domains in MIR.</title>
        <authorList>
            <person name="Bornhauser B.C."/>
            <person name="Johansson C."/>
            <person name="Lindholm D."/>
        </authorList>
    </citation>
    <scope>MUTAGENESIS OF CYS-387</scope>
    <scope>FUNCTION</scope>
    <scope>SUBCELLULAR LOCATION</scope>
    <scope>AUTOUBIQUITINATION</scope>
</reference>
<reference key="10">
    <citation type="journal article" date="2003" name="J. Biol. Chem.">
        <title>MSAP is a novel MIR-interacting protein that enhances neurite outgrowth and increases myosin regulatory light chain.</title>
        <authorList>
            <person name="Bornhauser B.C."/>
            <person name="Olsson P.-A."/>
            <person name="Lindholm D."/>
        </authorList>
    </citation>
    <scope>FUNCTION</scope>
    <scope>INTERACTION WITH TMEM4</scope>
</reference>
<reference key="11">
    <citation type="journal article" date="2009" name="Science">
        <title>LXR regulates cholesterol uptake through Idol-dependent ubiquitination of the LDL receptor.</title>
        <authorList>
            <person name="Zelcer N."/>
            <person name="Hong C."/>
            <person name="Boyadjian R."/>
            <person name="Tontonoz P."/>
        </authorList>
    </citation>
    <scope>FUNCTION</scope>
    <scope>INDUCTION</scope>
    <scope>MUTAGENESIS OF CYS-387</scope>
</reference>
<reference key="12">
    <citation type="journal article" date="2010" name="J. Biol. Chem.">
        <title>The E3 ubiquitin ligase IDOL induces the degradation of the low density lipoprotein receptor family members VLDLR and ApoER2.</title>
        <authorList>
            <person name="Hong C."/>
            <person name="Duit S."/>
            <person name="Jalonen P."/>
            <person name="Out R."/>
            <person name="Scheer L."/>
            <person name="Sorrentino V."/>
            <person name="Boyadjian R."/>
            <person name="Rodenburg K.W."/>
            <person name="Foley E."/>
            <person name="Korhonen L."/>
            <person name="Lindholm D."/>
            <person name="Nimpf J."/>
            <person name="van Berkel T.J."/>
            <person name="Tontonoz P."/>
            <person name="Zelcer N."/>
        </authorList>
    </citation>
    <scope>FUNCTION</scope>
</reference>
<reference key="13">
    <citation type="journal article" date="2011" name="Proc. Natl. Acad. Sci. U.S.A.">
        <title>FERM-dependent E3 ligase recognition is a conserved mechanism for targeted degradation of lipoprotein receptors.</title>
        <authorList>
            <person name="Calkin A.C."/>
            <person name="Goult B.T."/>
            <person name="Zhang L."/>
            <person name="Fairall L."/>
            <person name="Hong C."/>
            <person name="Schwabe J.W."/>
            <person name="Tontonoz P."/>
        </authorList>
    </citation>
    <scope>FUNCTION</scope>
    <scope>AUTOUBIQUITINATION</scope>
    <scope>MUTAGENESIS OF TYR-265 AND THR-269</scope>
</reference>
<reference key="14">
    <citation type="journal article" date="2011" name="Genes Dev.">
        <title>The IDOL-UBE2D complex mediates sterol-dependent degradation of the LDL receptor.</title>
        <authorList>
            <person name="Zhang L."/>
            <person name="Fairall L."/>
            <person name="Goult B.T."/>
            <person name="Calkin A.C."/>
            <person name="Hong C."/>
            <person name="Millard C.J."/>
            <person name="Tontonoz P."/>
            <person name="Schwabe J.W."/>
        </authorList>
    </citation>
    <scope>X-RAY CRYSTALLOGRAPHY (2.1 ANGSTROMS) OF 369-445 IN COMPLEX WITH UBE2D1</scope>
    <scope>SUBUNIT</scope>
    <scope>ACTIVITY REGULATION</scope>
    <scope>IRON-BINDING SITES</scope>
    <scope>MUTAGENESIS OF CYS-387; VAL-389 AND LEU-415</scope>
</reference>
<feature type="chain" id="PRO_0000055972" description="E3 ubiquitin-protein ligase MYLIP">
    <location>
        <begin position="1"/>
        <end position="445"/>
    </location>
</feature>
<feature type="domain" description="FERM" evidence="1">
    <location>
        <begin position="1"/>
        <end position="279"/>
    </location>
</feature>
<feature type="zinc finger region" description="RING-type" evidence="2">
    <location>
        <begin position="387"/>
        <end position="422"/>
    </location>
</feature>
<feature type="region of interest" description="Critical for homodimerization">
    <location>
        <begin position="431"/>
        <end position="433"/>
    </location>
</feature>
<feature type="binding site">
    <location>
        <position position="360"/>
    </location>
    <ligand>
        <name>Fe cation</name>
        <dbReference type="ChEBI" id="CHEBI:24875"/>
    </ligand>
</feature>
<feature type="binding site">
    <location>
        <position position="363"/>
    </location>
    <ligand>
        <name>Fe cation</name>
        <dbReference type="ChEBI" id="CHEBI:24875"/>
    </ligand>
</feature>
<feature type="binding site">
    <location>
        <position position="368"/>
    </location>
    <ligand>
        <name>Fe cation</name>
        <dbReference type="ChEBI" id="CHEBI:24875"/>
    </ligand>
</feature>
<feature type="splice variant" id="VSP_011828" description="In isoform 2." evidence="13">
    <location>
        <begin position="1"/>
        <end position="181"/>
    </location>
</feature>
<feature type="splice variant" id="VSP_011829" description="In isoform 2." evidence="13">
    <location>
        <begin position="316"/>
        <end position="445"/>
    </location>
</feature>
<feature type="sequence variant" id="VAR_019805" description="In dbSNP:rs9370867." evidence="3 4 7 12">
    <original>N</original>
    <variation>S</variation>
    <location>
        <position position="342"/>
    </location>
</feature>
<feature type="mutagenesis site" description="Unable to clear LDLR from the plasma membrane." evidence="11">
    <original>Y</original>
    <variation>A</variation>
    <location>
        <position position="265"/>
    </location>
</feature>
<feature type="mutagenesis site" description="Unable to clear LDLR from the plasma membrane." evidence="11">
    <original>T</original>
    <variation>R</variation>
    <location>
        <position position="269"/>
    </location>
</feature>
<feature type="mutagenesis site" description="Abolishes autoubiquitination." evidence="6 8 10">
    <original>C</original>
    <variation>A</variation>
    <location>
        <position position="387"/>
    </location>
</feature>
<feature type="mutagenesis site" description="Abolishes ubiquitin ligase activity." evidence="6 8 10">
    <original>C</original>
    <variation>A</variation>
    <location>
        <position position="387"/>
    </location>
</feature>
<feature type="mutagenesis site" description="Inhibits LDLR degradation." evidence="10">
    <original>V</original>
    <variation>R</variation>
    <location>
        <position position="389"/>
    </location>
</feature>
<feature type="mutagenesis site" description="Inhibits LDLR degradation." evidence="10">
    <original>L</original>
    <variation>E</variation>
    <location>
        <position position="415"/>
    </location>
</feature>
<feature type="sequence conflict" description="In Ref. 1; AAF18974." evidence="14" ref="1">
    <original>K</original>
    <variation>R</variation>
    <location>
        <position position="199"/>
    </location>
</feature>
<feature type="sequence conflict" description="In Ref. 3; AAF87323." evidence="14" ref="3">
    <original>SG</original>
    <variation>TR</variation>
    <location>
        <begin position="262"/>
        <end position="263"/>
    </location>
</feature>
<feature type="sequence conflict" description="In Ref. 3; AAF87323." evidence="14" ref="3">
    <original>KK</original>
    <variation>PRN</variation>
    <location>
        <begin position="309"/>
        <end position="310"/>
    </location>
</feature>
<feature type="strand" evidence="17">
    <location>
        <begin position="2"/>
        <end position="6"/>
    </location>
</feature>
<feature type="strand" evidence="17">
    <location>
        <begin position="12"/>
        <end position="16"/>
    </location>
</feature>
<feature type="helix" evidence="17">
    <location>
        <begin position="23"/>
        <end position="34"/>
    </location>
</feature>
<feature type="helix" evidence="17">
    <location>
        <begin position="39"/>
        <end position="41"/>
    </location>
</feature>
<feature type="strand" evidence="17">
    <location>
        <begin position="42"/>
        <end position="47"/>
    </location>
</feature>
<feature type="strand" evidence="17">
    <location>
        <begin position="53"/>
        <end position="55"/>
    </location>
</feature>
<feature type="strand" evidence="17">
    <location>
        <begin position="58"/>
        <end position="61"/>
    </location>
</feature>
<feature type="helix" evidence="17">
    <location>
        <begin position="62"/>
        <end position="65"/>
    </location>
</feature>
<feature type="strand" evidence="17">
    <location>
        <begin position="71"/>
        <end position="80"/>
    </location>
</feature>
<feature type="helix" evidence="17">
    <location>
        <begin position="84"/>
        <end position="86"/>
    </location>
</feature>
<feature type="helix" evidence="17">
    <location>
        <begin position="90"/>
        <end position="105"/>
    </location>
</feature>
<feature type="helix" evidence="17">
    <location>
        <begin position="113"/>
        <end position="127"/>
    </location>
</feature>
<feature type="strand" evidence="17">
    <location>
        <begin position="133"/>
        <end position="135"/>
    </location>
</feature>
<feature type="turn" evidence="17">
    <location>
        <begin position="141"/>
        <end position="143"/>
    </location>
</feature>
<feature type="strand" evidence="17">
    <location>
        <begin position="144"/>
        <end position="146"/>
    </location>
</feature>
<feature type="helix" evidence="17">
    <location>
        <begin position="150"/>
        <end position="162"/>
    </location>
</feature>
<feature type="turn" evidence="17">
    <location>
        <begin position="163"/>
        <end position="165"/>
    </location>
</feature>
<feature type="helix" evidence="17">
    <location>
        <begin position="168"/>
        <end position="181"/>
    </location>
</feature>
<feature type="turn" evidence="17">
    <location>
        <begin position="183"/>
        <end position="186"/>
    </location>
</feature>
<feature type="strand" evidence="18">
    <location>
        <begin position="188"/>
        <end position="193"/>
    </location>
</feature>
<feature type="turn" evidence="17">
    <location>
        <begin position="195"/>
        <end position="197"/>
    </location>
</feature>
<feature type="strand" evidence="18">
    <location>
        <begin position="199"/>
        <end position="204"/>
    </location>
</feature>
<feature type="strand" evidence="18">
    <location>
        <begin position="206"/>
        <end position="213"/>
    </location>
</feature>
<feature type="strand" evidence="18">
    <location>
        <begin position="218"/>
        <end position="223"/>
    </location>
</feature>
<feature type="helix" evidence="18">
    <location>
        <begin position="224"/>
        <end position="226"/>
    </location>
</feature>
<feature type="strand" evidence="18">
    <location>
        <begin position="227"/>
        <end position="233"/>
    </location>
</feature>
<feature type="strand" evidence="18">
    <location>
        <begin position="236"/>
        <end position="242"/>
    </location>
</feature>
<feature type="strand" evidence="18">
    <location>
        <begin position="248"/>
        <end position="254"/>
    </location>
</feature>
<feature type="helix" evidence="18">
    <location>
        <begin position="258"/>
        <end position="270"/>
    </location>
</feature>
<feature type="turn" evidence="18">
    <location>
        <begin position="273"/>
        <end position="275"/>
    </location>
</feature>
<feature type="helix" evidence="17">
    <location>
        <begin position="280"/>
        <end position="298"/>
    </location>
</feature>
<feature type="turn" evidence="17">
    <location>
        <begin position="308"/>
        <end position="310"/>
    </location>
</feature>
<feature type="helix" evidence="17">
    <location>
        <begin position="319"/>
        <end position="331"/>
    </location>
</feature>
<feature type="helix" evidence="16">
    <location>
        <begin position="374"/>
        <end position="384"/>
    </location>
</feature>
<feature type="turn" evidence="16">
    <location>
        <begin position="388"/>
        <end position="390"/>
    </location>
</feature>
<feature type="strand" evidence="16">
    <location>
        <begin position="391"/>
        <end position="394"/>
    </location>
</feature>
<feature type="strand" evidence="16">
    <location>
        <begin position="397"/>
        <end position="400"/>
    </location>
</feature>
<feature type="helix" evidence="16">
    <location>
        <begin position="409"/>
        <end position="412"/>
    </location>
</feature>
<feature type="turn" evidence="16">
    <location>
        <begin position="419"/>
        <end position="421"/>
    </location>
</feature>
<feature type="strand" evidence="16">
    <location>
        <begin position="427"/>
        <end position="430"/>
    </location>
</feature>
<gene>
    <name type="primary">MYLIP</name>
    <name type="synonym">BZF1</name>
    <name type="synonym">IDOL</name>
    <name type="ORF">BM-023</name>
    <name type="ORF">PP5242</name>
</gene>
<comment type="function">
    <text evidence="3 5 6 8 9 11">E3 ubiquitin-protein ligase that mediates ubiquitination and subsequent proteasomal degradation of myosin regulatory light chain (MRLC), LDLR, VLDLR and LRP8. Activity depends on E2 enzymes of the UBE2D family. Proteasomal degradation of MRLC leads to inhibit neurite outgrowth in presence of NGF by counteracting the stabilization of MRLC by saposin-like protein (CNPY2/MSAP) and reducing CNPY2-stimulated neurite outgrowth. Acts as a sterol-dependent inhibitor of cellular cholesterol uptake by mediating ubiquitination and subsequent degradation of LDLR.</text>
</comment>
<comment type="catalytic activity">
    <reaction>
        <text>S-ubiquitinyl-[E2 ubiquitin-conjugating enzyme]-L-cysteine + [acceptor protein]-L-lysine = [E2 ubiquitin-conjugating enzyme]-L-cysteine + N(6)-ubiquitinyl-[acceptor protein]-L-lysine.</text>
        <dbReference type="EC" id="2.3.2.27"/>
    </reaction>
</comment>
<comment type="activity regulation">
    <text evidence="10">Can bind 1 iron ion per dimer. Iron binding seems to decrease LDLR degradation activity.</text>
</comment>
<comment type="pathway">
    <text>Protein modification; protein ubiquitination.</text>
</comment>
<comment type="subunit">
    <text evidence="3 5 10">Homodimer. Interacts with the E2 ubiquitin-conjugating enzyme, UBE2D1 (via RING-type zinc finger). Interacts with myosin regulatory light chain (MRLC) and TMEM4.</text>
</comment>
<comment type="interaction">
    <interactant intactId="EBI-6952711">
        <id>Q8WY64</id>
    </interactant>
    <interactant intactId="EBI-10173507">
        <id>Q6UY14-3</id>
        <label>ADAMTSL4</label>
    </interactant>
    <organismsDiffer>false</organismsDiffer>
    <experiments>3</experiments>
</comment>
<comment type="interaction">
    <interactant intactId="EBI-6952711">
        <id>Q8WY64</id>
    </interactant>
    <interactant intactId="EBI-21535880">
        <id>Q92870-2</id>
        <label>APBB2</label>
    </interactant>
    <organismsDiffer>false</organismsDiffer>
    <experiments>3</experiments>
</comment>
<comment type="interaction">
    <interactant intactId="EBI-6952711">
        <id>Q8WY64</id>
    </interactant>
    <interactant intactId="EBI-948603">
        <id>Q03989</id>
        <label>ARID5A</label>
    </interactant>
    <organismsDiffer>false</organismsDiffer>
    <experiments>3</experiments>
</comment>
<comment type="interaction">
    <interactant intactId="EBI-6952711">
        <id>Q8WY64</id>
    </interactant>
    <interactant intactId="EBI-946046">
        <id>P54252</id>
        <label>ATXN3</label>
    </interactant>
    <organismsDiffer>false</organismsDiffer>
    <experiments>3</experiments>
</comment>
<comment type="interaction">
    <interactant intactId="EBI-6952711">
        <id>Q8WY64</id>
    </interactant>
    <interactant intactId="EBI-1054195">
        <id>Q9Y2B0</id>
        <label>CNPY2</label>
    </interactant>
    <organismsDiffer>false</organismsDiffer>
    <experiments>3</experiments>
</comment>
<comment type="interaction">
    <interactant intactId="EBI-6952711">
        <id>Q8WY64</id>
    </interactant>
    <interactant intactId="EBI-742054">
        <id>Q96D03</id>
        <label>DDIT4L</label>
    </interactant>
    <organismsDiffer>false</organismsDiffer>
    <experiments>3</experiments>
</comment>
<comment type="interaction">
    <interactant intactId="EBI-6952711">
        <id>Q8WY64</id>
    </interactant>
    <interactant intactId="EBI-10976677">
        <id>G5E9A7</id>
        <label>DMWD</label>
    </interactant>
    <organismsDiffer>false</organismsDiffer>
    <experiments>3</experiments>
</comment>
<comment type="interaction">
    <interactant intactId="EBI-6952711">
        <id>Q8WY64</id>
    </interactant>
    <interactant intactId="EBI-2349927">
        <id>Q5JST6</id>
        <label>EFHC2</label>
    </interactant>
    <organismsDiffer>false</organismsDiffer>
    <experiments>3</experiments>
</comment>
<comment type="interaction">
    <interactant intactId="EBI-6952711">
        <id>Q8WY64</id>
    </interactant>
    <interactant intactId="EBI-371876">
        <id>Q9NQT4</id>
        <label>EXOSC5</label>
    </interactant>
    <organismsDiffer>false</organismsDiffer>
    <experiments>3</experiments>
</comment>
<comment type="interaction">
    <interactant intactId="EBI-6952711">
        <id>Q8WY64</id>
    </interactant>
    <interactant intactId="EBI-19153639">
        <id>Q9NTX9</id>
        <label>FAM217B</label>
    </interactant>
    <organismsDiffer>false</organismsDiffer>
    <experiments>3</experiments>
</comment>
<comment type="interaction">
    <interactant intactId="EBI-6952711">
        <id>Q8WY64</id>
    </interactant>
    <interactant intactId="EBI-2548508">
        <id>Q96IK5</id>
        <label>GMCL1</label>
    </interactant>
    <organismsDiffer>false</organismsDiffer>
    <experiments>3</experiments>
</comment>
<comment type="interaction">
    <interactant intactId="EBI-6952711">
        <id>Q8WY64</id>
    </interactant>
    <interactant intactId="EBI-10961706">
        <id>Q96ED9-2</id>
        <label>HOOK2</label>
    </interactant>
    <organismsDiffer>false</organismsDiffer>
    <experiments>3</experiments>
</comment>
<comment type="interaction">
    <interactant intactId="EBI-6952711">
        <id>Q8WY64</id>
    </interactant>
    <interactant intactId="EBI-517086">
        <id>O43464</id>
        <label>HTRA2</label>
    </interactant>
    <organismsDiffer>false</organismsDiffer>
    <experiments>3</experiments>
</comment>
<comment type="interaction">
    <interactant intactId="EBI-6952711">
        <id>Q8WY64</id>
    </interactant>
    <interactant intactId="EBI-6398041">
        <id>Q9UMF0</id>
        <label>ICAM5</label>
    </interactant>
    <organismsDiffer>false</organismsDiffer>
    <experiments>3</experiments>
</comment>
<comment type="interaction">
    <interactant intactId="EBI-6952711">
        <id>Q8WY64</id>
    </interactant>
    <interactant intactId="EBI-715611">
        <id>Q9C086</id>
        <label>INO80B</label>
    </interactant>
    <organismsDiffer>false</organismsDiffer>
    <experiments>3</experiments>
</comment>
<comment type="interaction">
    <interactant intactId="EBI-6952711">
        <id>Q8WY64</id>
    </interactant>
    <interactant intactId="EBI-9355810">
        <id>Q5T7N3</id>
        <label>KANK4</label>
    </interactant>
    <organismsDiffer>false</organismsDiffer>
    <experiments>3</experiments>
</comment>
<comment type="interaction">
    <interactant intactId="EBI-6952711">
        <id>Q8WY64</id>
    </interactant>
    <interactant intactId="EBI-948266">
        <id>O14901</id>
        <label>KLF11</label>
    </interactant>
    <organismsDiffer>false</organismsDiffer>
    <experiments>3</experiments>
</comment>
<comment type="interaction">
    <interactant intactId="EBI-6952711">
        <id>Q8WY64</id>
    </interactant>
    <interactant intactId="EBI-2340947">
        <id>Q8N448</id>
        <label>LNX2</label>
    </interactant>
    <organismsDiffer>false</organismsDiffer>
    <experiments>4</experiments>
</comment>
<comment type="interaction">
    <interactant intactId="EBI-6952711">
        <id>Q8WY64</id>
    </interactant>
    <interactant intactId="EBI-2548751">
        <id>Q8TD10</id>
        <label>MIPOL1</label>
    </interactant>
    <organismsDiffer>false</organismsDiffer>
    <experiments>3</experiments>
</comment>
<comment type="interaction">
    <interactant intactId="EBI-6952711">
        <id>Q8WY64</id>
    </interactant>
    <interactant intactId="EBI-12868744">
        <id>P0CG21</id>
        <label>NHLRC4</label>
    </interactant>
    <organismsDiffer>false</organismsDiffer>
    <experiments>3</experiments>
</comment>
<comment type="interaction">
    <interactant intactId="EBI-6952711">
        <id>Q8WY64</id>
    </interactant>
    <interactant intactId="EBI-12025760">
        <id>Q86UR1-2</id>
        <label>NOXA1</label>
    </interactant>
    <organismsDiffer>false</organismsDiffer>
    <experiments>5</experiments>
</comment>
<comment type="interaction">
    <interactant intactId="EBI-6952711">
        <id>Q8WY64</id>
    </interactant>
    <interactant intactId="EBI-10250949">
        <id>Q6NSM0</id>
        <label>NR1D2</label>
    </interactant>
    <organismsDiffer>false</organismsDiffer>
    <experiments>6</experiments>
</comment>
<comment type="interaction">
    <interactant intactId="EBI-6952711">
        <id>Q8WY64</id>
    </interactant>
    <interactant intactId="EBI-12111000">
        <id>P55771</id>
        <label>PAX9</label>
    </interactant>
    <organismsDiffer>false</organismsDiffer>
    <experiments>6</experiments>
</comment>
<comment type="interaction">
    <interactant intactId="EBI-6952711">
        <id>Q8WY64</id>
    </interactant>
    <interactant intactId="EBI-50433196">
        <id>A0A6Q8PF08</id>
        <label>PMP22</label>
    </interactant>
    <organismsDiffer>false</organismsDiffer>
    <experiments>3</experiments>
</comment>
<comment type="interaction">
    <interactant intactId="EBI-6952711">
        <id>Q8WY64</id>
    </interactant>
    <interactant intactId="EBI-367390">
        <id>Q8WWW0</id>
        <label>RASSF5</label>
    </interactant>
    <organismsDiffer>false</organismsDiffer>
    <experiments>4</experiments>
</comment>
<comment type="interaction">
    <interactant intactId="EBI-6952711">
        <id>Q8WY64</id>
    </interactant>
    <interactant intactId="EBI-748391">
        <id>Q9BWG6</id>
        <label>SCNM1</label>
    </interactant>
    <organismsDiffer>false</organismsDiffer>
    <experiments>3</experiments>
</comment>
<comment type="interaction">
    <interactant intactId="EBI-6952711">
        <id>Q8WY64</id>
    </interactant>
    <interactant intactId="EBI-727004">
        <id>O00560</id>
        <label>SDCBP</label>
    </interactant>
    <organismsDiffer>false</organismsDiffer>
    <experiments>3</experiments>
</comment>
<comment type="interaction">
    <interactant intactId="EBI-6952711">
        <id>Q8WY64</id>
    </interactant>
    <interactant intactId="EBI-5235340">
        <id>Q7Z699</id>
        <label>SPRED1</label>
    </interactant>
    <organismsDiffer>false</organismsDiffer>
    <experiments>3</experiments>
</comment>
<comment type="interaction">
    <interactant intactId="EBI-6952711">
        <id>Q8WY64</id>
    </interactant>
    <interactant intactId="EBI-11955057">
        <id>Q8N8B7-2</id>
        <label>TCEANC</label>
    </interactant>
    <organismsDiffer>false</organismsDiffer>
    <experiments>3</experiments>
</comment>
<comment type="interaction">
    <interactant intactId="EBI-6952711">
        <id>Q8WY64</id>
    </interactant>
    <interactant intactId="EBI-12806590">
        <id>Q86WV8</id>
        <label>TSC1</label>
    </interactant>
    <organismsDiffer>false</organismsDiffer>
    <experiments>6</experiments>
</comment>
<comment type="interaction">
    <interactant intactId="EBI-6952711">
        <id>Q8WY64</id>
    </interactant>
    <interactant intactId="EBI-739485">
        <id>Q9Y3Q8</id>
        <label>TSC22D4</label>
    </interactant>
    <organismsDiffer>false</organismsDiffer>
    <experiments>3</experiments>
</comment>
<comment type="interaction">
    <interactant intactId="EBI-6952711">
        <id>Q8WY64</id>
    </interactant>
    <interactant intactId="EBI-711925">
        <id>Q05516</id>
        <label>ZBTB16</label>
    </interactant>
    <organismsDiffer>false</organismsDiffer>
    <experiments>3</experiments>
</comment>
<comment type="interaction">
    <interactant intactId="EBI-6952711">
        <id>Q8WY64</id>
    </interactant>
    <interactant intactId="EBI-3232046">
        <id>Q99592</id>
        <label>ZBTB18</label>
    </interactant>
    <organismsDiffer>false</organismsDiffer>
    <experiments>3</experiments>
</comment>
<comment type="interaction">
    <interactant intactId="EBI-6952711">
        <id>Q8WY64</id>
    </interactant>
    <interactant intactId="EBI-12287587">
        <id>B2RXF5</id>
        <label>ZBTB42</label>
    </interactant>
    <organismsDiffer>false</organismsDiffer>
    <experiments>3</experiments>
</comment>
<comment type="interaction">
    <interactant intactId="EBI-6952711">
        <id>Q8WY64</id>
    </interactant>
    <interactant intactId="EBI-740727">
        <id>Q8TAU3</id>
        <label>ZNF417</label>
    </interactant>
    <organismsDiffer>false</organismsDiffer>
    <experiments>3</experiments>
</comment>
<comment type="interaction">
    <interactant intactId="EBI-6952711">
        <id>Q8WY64</id>
    </interactant>
    <interactant intactId="EBI-11962468">
        <id>Q7Z4V0</id>
        <label>ZNF438</label>
    </interactant>
    <organismsDiffer>false</organismsDiffer>
    <experiments>3</experiments>
</comment>
<comment type="subcellular location">
    <subcellularLocation>
        <location evidence="15">Cytoplasm</location>
    </subcellularLocation>
    <subcellularLocation>
        <location evidence="6">Cell membrane</location>
        <topology evidence="6">Peripheral membrane protein</topology>
    </subcellularLocation>
</comment>
<comment type="alternative products">
    <event type="alternative splicing"/>
    <isoform>
        <id>Q8WY64-1</id>
        <name>1</name>
        <sequence type="displayed"/>
    </isoform>
    <isoform>
        <id>Q8WY64-2</id>
        <name>2</name>
        <sequence type="described" ref="VSP_011828 VSP_011829"/>
    </isoform>
</comment>
<comment type="tissue specificity">
    <text evidence="3">Ubiquitously expressed.</text>
</comment>
<comment type="developmental stage">
    <text evidence="3">Expressed in fetal tissues and higher levels were detected in placenta and fetal lung.</text>
</comment>
<comment type="induction">
    <text evidence="8">Expression is directly activated by NR1H2 and NR1H3. Expression is not dependent of the sterol-response element-binding proteins (SREBPs). Expression is indirectly induced by LDL.</text>
</comment>
<comment type="domain">
    <text>The RING domain mediates ubiquitination and the neurite outgrowth inhibitory activity.</text>
</comment>
<comment type="domain">
    <text>The FERM domain binds phospholipids and mediates lipoprotein receptors recognition at the plasma membrane through their cytoplasmic tails.</text>
</comment>
<comment type="domain">
    <text>The RING-type zinc finger mediates the interaction with UBE2D E2 enzymes.</text>
</comment>
<comment type="PTM">
    <text evidence="6 11">Autoubiquitinated.</text>
</comment>
<dbReference type="EC" id="2.3.2.27"/>
<dbReference type="EMBL" id="AF187016">
    <property type="protein sequence ID" value="AAF18974.1"/>
    <property type="molecule type" value="mRNA"/>
</dbReference>
<dbReference type="EMBL" id="AF006003">
    <property type="protein sequence ID" value="AAQ13408.1"/>
    <property type="molecule type" value="mRNA"/>
</dbReference>
<dbReference type="EMBL" id="AF006004">
    <property type="protein sequence ID" value="AAQ13409.1"/>
    <property type="molecule type" value="Genomic_DNA"/>
</dbReference>
<dbReference type="EMBL" id="AF212221">
    <property type="protein sequence ID" value="AAF87323.1"/>
    <property type="molecule type" value="mRNA"/>
</dbReference>
<dbReference type="EMBL" id="AF258586">
    <property type="protein sequence ID" value="AAG23789.1"/>
    <property type="molecule type" value="mRNA"/>
</dbReference>
<dbReference type="EMBL" id="BT007055">
    <property type="protein sequence ID" value="AAP35704.1"/>
    <property type="molecule type" value="mRNA"/>
</dbReference>
<dbReference type="EMBL" id="AL021407">
    <property type="status" value="NOT_ANNOTATED_CDS"/>
    <property type="molecule type" value="Genomic_DNA"/>
</dbReference>
<dbReference type="EMBL" id="CH471087">
    <property type="protein sequence ID" value="EAW55366.1"/>
    <property type="molecule type" value="Genomic_DNA"/>
</dbReference>
<dbReference type="EMBL" id="BC002860">
    <property type="protein sequence ID" value="AAH02860.1"/>
    <property type="molecule type" value="mRNA"/>
</dbReference>
<dbReference type="CCDS" id="CCDS4536.1">
    <molecule id="Q8WY64-1"/>
</dbReference>
<dbReference type="RefSeq" id="NP_037394.2">
    <molecule id="Q8WY64-1"/>
    <property type="nucleotide sequence ID" value="NM_013262.3"/>
</dbReference>
<dbReference type="PDB" id="2YHN">
    <property type="method" value="X-ray"/>
    <property type="resolution" value="3.00 A"/>
    <property type="chains" value="A/B=369-445"/>
</dbReference>
<dbReference type="PDB" id="2YHO">
    <property type="method" value="X-ray"/>
    <property type="resolution" value="2.10 A"/>
    <property type="chains" value="A/C/E/G=369-445"/>
</dbReference>
<dbReference type="PDB" id="6QLY">
    <property type="method" value="X-ray"/>
    <property type="resolution" value="2.50 A"/>
    <property type="chains" value="A=1-344"/>
</dbReference>
<dbReference type="PDB" id="6QLZ">
    <property type="method" value="X-ray"/>
    <property type="resolution" value="2.34 A"/>
    <property type="chains" value="A/B/C=183-283"/>
</dbReference>
<dbReference type="PDBsum" id="2YHN"/>
<dbReference type="PDBsum" id="2YHO"/>
<dbReference type="PDBsum" id="6QLY"/>
<dbReference type="PDBsum" id="6QLZ"/>
<dbReference type="BMRB" id="Q8WY64"/>
<dbReference type="SMR" id="Q8WY64"/>
<dbReference type="BioGRID" id="118882">
    <property type="interactions" value="55"/>
</dbReference>
<dbReference type="FunCoup" id="Q8WY64">
    <property type="interactions" value="891"/>
</dbReference>
<dbReference type="IntAct" id="Q8WY64">
    <property type="interactions" value="45"/>
</dbReference>
<dbReference type="MINT" id="Q8WY64"/>
<dbReference type="STRING" id="9606.ENSP00000349298"/>
<dbReference type="iPTMnet" id="Q8WY64"/>
<dbReference type="PhosphoSitePlus" id="Q8WY64"/>
<dbReference type="BioMuta" id="MYLIP"/>
<dbReference type="DMDM" id="84028296"/>
<dbReference type="jPOST" id="Q8WY64"/>
<dbReference type="MassIVE" id="Q8WY64"/>
<dbReference type="PaxDb" id="9606-ENSP00000349298"/>
<dbReference type="PeptideAtlas" id="Q8WY64"/>
<dbReference type="ProteomicsDB" id="75131">
    <molecule id="Q8WY64-1"/>
</dbReference>
<dbReference type="Antibodypedia" id="25043">
    <property type="antibodies" value="226 antibodies from 28 providers"/>
</dbReference>
<dbReference type="DNASU" id="29116"/>
<dbReference type="Ensembl" id="ENST00000356840.8">
    <molecule id="Q8WY64-1"/>
    <property type="protein sequence ID" value="ENSP00000349298.3"/>
    <property type="gene ID" value="ENSG00000007944.16"/>
</dbReference>
<dbReference type="GeneID" id="29116"/>
<dbReference type="KEGG" id="hsa:29116"/>
<dbReference type="MANE-Select" id="ENST00000356840.8">
    <property type="protein sequence ID" value="ENSP00000349298.3"/>
    <property type="RefSeq nucleotide sequence ID" value="NM_013262.4"/>
    <property type="RefSeq protein sequence ID" value="NP_037394.2"/>
</dbReference>
<dbReference type="UCSC" id="uc003nbq.4">
    <molecule id="Q8WY64-1"/>
    <property type="organism name" value="human"/>
</dbReference>
<dbReference type="AGR" id="HGNC:21155"/>
<dbReference type="CTD" id="29116"/>
<dbReference type="DisGeNET" id="29116"/>
<dbReference type="GeneCards" id="MYLIP"/>
<dbReference type="HGNC" id="HGNC:21155">
    <property type="gene designation" value="MYLIP"/>
</dbReference>
<dbReference type="HPA" id="ENSG00000007944">
    <property type="expression patterns" value="Low tissue specificity"/>
</dbReference>
<dbReference type="MIM" id="610082">
    <property type="type" value="gene"/>
</dbReference>
<dbReference type="neXtProt" id="NX_Q8WY64"/>
<dbReference type="OpenTargets" id="ENSG00000007944"/>
<dbReference type="PharmGKB" id="PA134942677"/>
<dbReference type="VEuPathDB" id="HostDB:ENSG00000007944"/>
<dbReference type="eggNOG" id="ENOG502QV76">
    <property type="taxonomic scope" value="Eukaryota"/>
</dbReference>
<dbReference type="GeneTree" id="ENSGT00940000156206"/>
<dbReference type="HOGENOM" id="CLU_031820_1_0_1"/>
<dbReference type="InParanoid" id="Q8WY64"/>
<dbReference type="OMA" id="NKGENLW"/>
<dbReference type="OrthoDB" id="10037309at2759"/>
<dbReference type="PAN-GO" id="Q8WY64">
    <property type="GO annotations" value="2 GO annotations based on evolutionary models"/>
</dbReference>
<dbReference type="PhylomeDB" id="Q8WY64"/>
<dbReference type="TreeFam" id="TF351936"/>
<dbReference type="PathwayCommons" id="Q8WY64"/>
<dbReference type="Reactome" id="R-HSA-8866427">
    <property type="pathway name" value="VLDLR internalisation and degradation"/>
</dbReference>
<dbReference type="Reactome" id="R-HSA-9031525">
    <property type="pathway name" value="NR1H2 &amp; NR1H3 regulate gene expression to limit cholesterol uptake"/>
</dbReference>
<dbReference type="Reactome" id="R-HSA-983168">
    <property type="pathway name" value="Antigen processing: Ubiquitination &amp; Proteasome degradation"/>
</dbReference>
<dbReference type="SignaLink" id="Q8WY64"/>
<dbReference type="SIGNOR" id="Q8WY64"/>
<dbReference type="UniPathway" id="UPA00143"/>
<dbReference type="BioGRID-ORCS" id="29116">
    <property type="hits" value="60 hits in 1206 CRISPR screens"/>
</dbReference>
<dbReference type="ChiTaRS" id="MYLIP">
    <property type="organism name" value="human"/>
</dbReference>
<dbReference type="EvolutionaryTrace" id="Q8WY64"/>
<dbReference type="GeneWiki" id="MYLIP"/>
<dbReference type="GenomeRNAi" id="29116"/>
<dbReference type="Pharos" id="Q8WY64">
    <property type="development level" value="Tbio"/>
</dbReference>
<dbReference type="PRO" id="PR:Q8WY64"/>
<dbReference type="Proteomes" id="UP000005640">
    <property type="component" value="Chromosome 6"/>
</dbReference>
<dbReference type="RNAct" id="Q8WY64">
    <property type="molecule type" value="protein"/>
</dbReference>
<dbReference type="Bgee" id="ENSG00000007944">
    <property type="expression patterns" value="Expressed in oocyte and 201 other cell types or tissues"/>
</dbReference>
<dbReference type="ExpressionAtlas" id="Q8WY64">
    <property type="expression patterns" value="baseline and differential"/>
</dbReference>
<dbReference type="GO" id="GO:0005856">
    <property type="term" value="C:cytoskeleton"/>
    <property type="evidence" value="ECO:0007669"/>
    <property type="project" value="InterPro"/>
</dbReference>
<dbReference type="GO" id="GO:0005829">
    <property type="term" value="C:cytosol"/>
    <property type="evidence" value="ECO:0000304"/>
    <property type="project" value="Reactome"/>
</dbReference>
<dbReference type="GO" id="GO:0005886">
    <property type="term" value="C:plasma membrane"/>
    <property type="evidence" value="ECO:0007669"/>
    <property type="project" value="UniProtKB-SubCell"/>
</dbReference>
<dbReference type="GO" id="GO:0008092">
    <property type="term" value="F:cytoskeletal protein binding"/>
    <property type="evidence" value="ECO:0000314"/>
    <property type="project" value="UniProtKB"/>
</dbReference>
<dbReference type="GO" id="GO:0061630">
    <property type="term" value="F:ubiquitin protein ligase activity"/>
    <property type="evidence" value="ECO:0000314"/>
    <property type="project" value="MGI"/>
</dbReference>
<dbReference type="GO" id="GO:0004842">
    <property type="term" value="F:ubiquitin-protein transferase activity"/>
    <property type="evidence" value="ECO:0000314"/>
    <property type="project" value="UniProtKB"/>
</dbReference>
<dbReference type="GO" id="GO:0008270">
    <property type="term" value="F:zinc ion binding"/>
    <property type="evidence" value="ECO:0007669"/>
    <property type="project" value="UniProtKB-KW"/>
</dbReference>
<dbReference type="GO" id="GO:0042632">
    <property type="term" value="P:cholesterol homeostasis"/>
    <property type="evidence" value="ECO:0007669"/>
    <property type="project" value="Ensembl"/>
</dbReference>
<dbReference type="GO" id="GO:0010989">
    <property type="term" value="P:negative regulation of low-density lipoprotein particle clearance"/>
    <property type="evidence" value="ECO:0007669"/>
    <property type="project" value="Ensembl"/>
</dbReference>
<dbReference type="GO" id="GO:0010977">
    <property type="term" value="P:negative regulation of neuron projection development"/>
    <property type="evidence" value="ECO:0000315"/>
    <property type="project" value="UniProtKB"/>
</dbReference>
<dbReference type="GO" id="GO:0007399">
    <property type="term" value="P:nervous system development"/>
    <property type="evidence" value="ECO:0000315"/>
    <property type="project" value="UniProtKB"/>
</dbReference>
<dbReference type="GO" id="GO:0045732">
    <property type="term" value="P:positive regulation of protein catabolic process"/>
    <property type="evidence" value="ECO:0007669"/>
    <property type="project" value="Ensembl"/>
</dbReference>
<dbReference type="GO" id="GO:0031648">
    <property type="term" value="P:protein destabilization"/>
    <property type="evidence" value="ECO:0007669"/>
    <property type="project" value="Ensembl"/>
</dbReference>
<dbReference type="GO" id="GO:0016567">
    <property type="term" value="P:protein ubiquitination"/>
    <property type="evidence" value="ECO:0000314"/>
    <property type="project" value="UniProtKB"/>
</dbReference>
<dbReference type="GO" id="GO:0032803">
    <property type="term" value="P:regulation of low-density lipoprotein particle receptor catabolic process"/>
    <property type="evidence" value="ECO:0007669"/>
    <property type="project" value="Ensembl"/>
</dbReference>
<dbReference type="GO" id="GO:0006511">
    <property type="term" value="P:ubiquitin-dependent protein catabolic process"/>
    <property type="evidence" value="ECO:0000318"/>
    <property type="project" value="GO_Central"/>
</dbReference>
<dbReference type="CDD" id="cd14473">
    <property type="entry name" value="FERM_B-lobe"/>
    <property type="match status" value="1"/>
</dbReference>
<dbReference type="CDD" id="cd13195">
    <property type="entry name" value="FERM_C_MYLIP_IDOL"/>
    <property type="match status" value="1"/>
</dbReference>
<dbReference type="CDD" id="cd17104">
    <property type="entry name" value="FERM_F1_MYLIP"/>
    <property type="match status" value="1"/>
</dbReference>
<dbReference type="CDD" id="cd16523">
    <property type="entry name" value="RING-HC_MYLIP"/>
    <property type="match status" value="1"/>
</dbReference>
<dbReference type="FunFam" id="1.20.80.10:FF:000019">
    <property type="entry name" value="E3 ubiquitin-protein ligase MYLIP"/>
    <property type="match status" value="1"/>
</dbReference>
<dbReference type="FunFam" id="3.10.20.90:FF:000129">
    <property type="entry name" value="E3 ubiquitin-protein ligase MYLIP isoform X1"/>
    <property type="match status" value="1"/>
</dbReference>
<dbReference type="FunFam" id="2.30.29.30:FF:000164">
    <property type="entry name" value="Putative E3 ubiquitin-protein ligase MYLIP"/>
    <property type="match status" value="1"/>
</dbReference>
<dbReference type="FunFam" id="3.30.40.10:FF:000175">
    <property type="entry name" value="Putative E3 ubiquitin-protein ligase MYLIP"/>
    <property type="match status" value="1"/>
</dbReference>
<dbReference type="Gene3D" id="1.20.80.10">
    <property type="match status" value="1"/>
</dbReference>
<dbReference type="Gene3D" id="3.10.20.90">
    <property type="entry name" value="Phosphatidylinositol 3-kinase Catalytic Subunit, Chain A, domain 1"/>
    <property type="match status" value="1"/>
</dbReference>
<dbReference type="Gene3D" id="2.30.29.30">
    <property type="entry name" value="Pleckstrin-homology domain (PH domain)/Phosphotyrosine-binding domain (PTB)"/>
    <property type="match status" value="1"/>
</dbReference>
<dbReference type="Gene3D" id="3.30.40.10">
    <property type="entry name" value="Zinc/RING finger domain, C3HC4 (zinc finger)"/>
    <property type="match status" value="1"/>
</dbReference>
<dbReference type="InterPro" id="IPR019749">
    <property type="entry name" value="Band_41_domain"/>
</dbReference>
<dbReference type="InterPro" id="IPR000798">
    <property type="entry name" value="Ez/rad/moesin-like"/>
</dbReference>
<dbReference type="InterPro" id="IPR014352">
    <property type="entry name" value="FERM/acyl-CoA-bd_prot_sf"/>
</dbReference>
<dbReference type="InterPro" id="IPR035963">
    <property type="entry name" value="FERM_2"/>
</dbReference>
<dbReference type="InterPro" id="IPR019748">
    <property type="entry name" value="FERM_central"/>
</dbReference>
<dbReference type="InterPro" id="IPR000299">
    <property type="entry name" value="FERM_domain"/>
</dbReference>
<dbReference type="InterPro" id="IPR018979">
    <property type="entry name" value="FERM_N"/>
</dbReference>
<dbReference type="InterPro" id="IPR018980">
    <property type="entry name" value="FERM_PH-like_C"/>
</dbReference>
<dbReference type="InterPro" id="IPR041790">
    <property type="entry name" value="MYLIP_FERM_C"/>
</dbReference>
<dbReference type="InterPro" id="IPR011993">
    <property type="entry name" value="PH-like_dom_sf"/>
</dbReference>
<dbReference type="InterPro" id="IPR029071">
    <property type="entry name" value="Ubiquitin-like_domsf"/>
</dbReference>
<dbReference type="InterPro" id="IPR001841">
    <property type="entry name" value="Znf_RING"/>
</dbReference>
<dbReference type="InterPro" id="IPR013083">
    <property type="entry name" value="Znf_RING/FYVE/PHD"/>
</dbReference>
<dbReference type="PANTHER" id="PTHR23280">
    <property type="entry name" value="4.1 G PROTEIN"/>
    <property type="match status" value="1"/>
</dbReference>
<dbReference type="PANTHER" id="PTHR23280:SF13">
    <property type="entry name" value="E3 UBIQUITIN-PROTEIN LIGASE MYLIP"/>
    <property type="match status" value="1"/>
</dbReference>
<dbReference type="Pfam" id="PF09380">
    <property type="entry name" value="FERM_C"/>
    <property type="match status" value="1"/>
</dbReference>
<dbReference type="Pfam" id="PF00373">
    <property type="entry name" value="FERM_M"/>
    <property type="match status" value="1"/>
</dbReference>
<dbReference type="Pfam" id="PF09379">
    <property type="entry name" value="FERM_N"/>
    <property type="match status" value="1"/>
</dbReference>
<dbReference type="Pfam" id="PF13920">
    <property type="entry name" value="zf-C3HC4_3"/>
    <property type="match status" value="1"/>
</dbReference>
<dbReference type="PRINTS" id="PR00935">
    <property type="entry name" value="BAND41"/>
</dbReference>
<dbReference type="PRINTS" id="PR00661">
    <property type="entry name" value="ERMFAMILY"/>
</dbReference>
<dbReference type="SMART" id="SM00295">
    <property type="entry name" value="B41"/>
    <property type="match status" value="1"/>
</dbReference>
<dbReference type="SMART" id="SM01196">
    <property type="entry name" value="FERM_C"/>
    <property type="match status" value="1"/>
</dbReference>
<dbReference type="SUPFAM" id="SSF50729">
    <property type="entry name" value="PH domain-like"/>
    <property type="match status" value="1"/>
</dbReference>
<dbReference type="SUPFAM" id="SSF57850">
    <property type="entry name" value="RING/U-box"/>
    <property type="match status" value="1"/>
</dbReference>
<dbReference type="SUPFAM" id="SSF47031">
    <property type="entry name" value="Second domain of FERM"/>
    <property type="match status" value="1"/>
</dbReference>
<dbReference type="SUPFAM" id="SSF54236">
    <property type="entry name" value="Ubiquitin-like"/>
    <property type="match status" value="1"/>
</dbReference>
<dbReference type="PROSITE" id="PS50057">
    <property type="entry name" value="FERM_3"/>
    <property type="match status" value="1"/>
</dbReference>
<dbReference type="PROSITE" id="PS50089">
    <property type="entry name" value="ZF_RING_2"/>
    <property type="match status" value="1"/>
</dbReference>
<accession>Q8WY64</accession>
<accession>Q5TIA4</accession>
<accession>Q9BU73</accession>
<accession>Q9NRL9</accession>
<accession>Q9UHE7</accession>
<name>MYLIP_HUMAN</name>
<protein>
    <recommendedName>
        <fullName>E3 ubiquitin-protein ligase MYLIP</fullName>
        <ecNumber>2.3.2.27</ecNumber>
    </recommendedName>
    <alternativeName>
        <fullName>Inducible degrader of the LDL-receptor</fullName>
        <shortName>Idol</shortName>
    </alternativeName>
    <alternativeName>
        <fullName>Myosin regulatory light chain interacting protein</fullName>
        <shortName>MIR</shortName>
    </alternativeName>
    <alternativeName>
        <fullName evidence="14">RING-type E3 ubiquitin transferase MYLIP</fullName>
    </alternativeName>
</protein>